<feature type="initiator methionine" description="Removed" evidence="1">
    <location>
        <position position="1"/>
    </location>
</feature>
<feature type="chain" id="PRO_0000348216" description="Dymeclin">
    <location>
        <begin position="2"/>
        <end position="700"/>
    </location>
</feature>
<feature type="modified residue" description="Phosphoserine" evidence="1">
    <location>
        <position position="347"/>
    </location>
</feature>
<feature type="lipid moiety-binding region" description="N-myristoyl glycine" evidence="1">
    <location>
        <position position="2"/>
    </location>
</feature>
<name>DYM_DROPS</name>
<proteinExistence type="inferred from homology"/>
<dbReference type="EMBL" id="CM000071">
    <property type="protein sequence ID" value="EAL24689.1"/>
    <property type="molecule type" value="Genomic_DNA"/>
</dbReference>
<dbReference type="FunCoup" id="Q293C2">
    <property type="interactions" value="2056"/>
</dbReference>
<dbReference type="STRING" id="46245.Q293C2"/>
<dbReference type="EnsemblMetazoa" id="FBtr0278831">
    <property type="protein sequence ID" value="FBpp0277269"/>
    <property type="gene ID" value="FBgn0080903"/>
</dbReference>
<dbReference type="KEGG" id="dpo:4803351"/>
<dbReference type="eggNOG" id="KOG2225">
    <property type="taxonomic scope" value="Eukaryota"/>
</dbReference>
<dbReference type="HOGENOM" id="CLU_013309_2_0_1"/>
<dbReference type="InParanoid" id="Q293C2"/>
<dbReference type="OMA" id="VWTLVCK"/>
<dbReference type="PhylomeDB" id="Q293C2"/>
<dbReference type="Proteomes" id="UP000001819">
    <property type="component" value="Chromosome 3"/>
</dbReference>
<dbReference type="Bgee" id="FBgn0080903">
    <property type="expression patterns" value="Expressed in male reproductive system and 3 other cell types or tissues"/>
</dbReference>
<dbReference type="GO" id="GO:0005794">
    <property type="term" value="C:Golgi apparatus"/>
    <property type="evidence" value="ECO:0007669"/>
    <property type="project" value="TreeGrafter"/>
</dbReference>
<dbReference type="GO" id="GO:0007030">
    <property type="term" value="P:Golgi organization"/>
    <property type="evidence" value="ECO:0007669"/>
    <property type="project" value="TreeGrafter"/>
</dbReference>
<dbReference type="InterPro" id="IPR019142">
    <property type="entry name" value="Dymeclin"/>
</dbReference>
<dbReference type="PANTHER" id="PTHR12895">
    <property type="entry name" value="DYMECLIN"/>
    <property type="match status" value="1"/>
</dbReference>
<dbReference type="PANTHER" id="PTHR12895:SF9">
    <property type="entry name" value="DYMECLIN"/>
    <property type="match status" value="1"/>
</dbReference>
<dbReference type="Pfam" id="PF09742">
    <property type="entry name" value="Dymeclin"/>
    <property type="match status" value="1"/>
</dbReference>
<sequence length="700" mass="79175">MGINVSRTADLGSNEWLQRFVGRHHIAHDDEAFWNGLLNYNIVLPENSQDQLNLDSRLETLCQSFIGNNLKTGNFGSLVTVFLEKTSELLSLSDQESNMHVWQTFNALFIIRTLVKYINETGSEFQLLQHFEALPSAELVQAAVELQQQTPAESATIAIEATEQAAAAAASAPVFVDGAKFETFIDALVNLIVVIPVKEFTYHLHLEAVNMLITLLSVHLFAQQPTEKSIVFRTVFKCQHANVLMSALLHFVARMVEVPHTMFGSSSAGSIVFGIAESLLSIFTFRKQQDVLKASNAVGGELSLQFRTHYPLANQSLLLILILTNHCTAQENAYRASLFGCADSKDSPKQGTVSFQIDFSAVYETLCRIVTIDQATLLLYLLLHRNERFYRFVMQQQDLEQLVIPILQTLYNAPDSNSHHIYMSLIVLLILSEDEGFNKNVHTIMLKNITWYTERSISEISLGGILILIVIRTIQYNMLKMRDKYLHTNCLAALANMSGHFRALHPYVAQRLVSLFETLARKHTRLDAQLKEPADSAVFVNVVTTAEDMLQDLSVLEEVLRMVLEILNSCLTNQLVYCPNLVYTLLYKRSVFEGFRSHHAFQDVVQNIDMVVGFFSSRLQRVQEQRGELGVNEVLEVISKGASQWSSDRLRKFPDLKFKYVEEDAPEEFFIPYVWTLVCKYGCVHFSSESIKTVTTDIAC</sequence>
<comment type="similarity">
    <text evidence="2">Belongs to the dymeclin family.</text>
</comment>
<protein>
    <recommendedName>
        <fullName>Dymeclin</fullName>
    </recommendedName>
</protein>
<organism>
    <name type="scientific">Drosophila pseudoobscura pseudoobscura</name>
    <name type="common">Fruit fly</name>
    <dbReference type="NCBI Taxonomy" id="46245"/>
    <lineage>
        <taxon>Eukaryota</taxon>
        <taxon>Metazoa</taxon>
        <taxon>Ecdysozoa</taxon>
        <taxon>Arthropoda</taxon>
        <taxon>Hexapoda</taxon>
        <taxon>Insecta</taxon>
        <taxon>Pterygota</taxon>
        <taxon>Neoptera</taxon>
        <taxon>Endopterygota</taxon>
        <taxon>Diptera</taxon>
        <taxon>Brachycera</taxon>
        <taxon>Muscomorpha</taxon>
        <taxon>Ephydroidea</taxon>
        <taxon>Drosophilidae</taxon>
        <taxon>Drosophila</taxon>
        <taxon>Sophophora</taxon>
    </lineage>
</organism>
<keyword id="KW-0449">Lipoprotein</keyword>
<keyword id="KW-0519">Myristate</keyword>
<keyword id="KW-0597">Phosphoprotein</keyword>
<keyword id="KW-1185">Reference proteome</keyword>
<accession>Q293C2</accession>
<reference key="1">
    <citation type="journal article" date="2005" name="Genome Res.">
        <title>Comparative genome sequencing of Drosophila pseudoobscura: chromosomal, gene, and cis-element evolution.</title>
        <authorList>
            <person name="Richards S."/>
            <person name="Liu Y."/>
            <person name="Bettencourt B.R."/>
            <person name="Hradecky P."/>
            <person name="Letovsky S."/>
            <person name="Nielsen R."/>
            <person name="Thornton K."/>
            <person name="Hubisz M.J."/>
            <person name="Chen R."/>
            <person name="Meisel R.P."/>
            <person name="Couronne O."/>
            <person name="Hua S."/>
            <person name="Smith M.A."/>
            <person name="Zhang P."/>
            <person name="Liu J."/>
            <person name="Bussemaker H.J."/>
            <person name="van Batenburg M.F."/>
            <person name="Howells S.L."/>
            <person name="Scherer S.E."/>
            <person name="Sodergren E."/>
            <person name="Matthews B.B."/>
            <person name="Crosby M.A."/>
            <person name="Schroeder A.J."/>
            <person name="Ortiz-Barrientos D."/>
            <person name="Rives C.M."/>
            <person name="Metzker M.L."/>
            <person name="Muzny D.M."/>
            <person name="Scott G."/>
            <person name="Steffen D."/>
            <person name="Wheeler D.A."/>
            <person name="Worley K.C."/>
            <person name="Havlak P."/>
            <person name="Durbin K.J."/>
            <person name="Egan A."/>
            <person name="Gill R."/>
            <person name="Hume J."/>
            <person name="Morgan M.B."/>
            <person name="Miner G."/>
            <person name="Hamilton C."/>
            <person name="Huang Y."/>
            <person name="Waldron L."/>
            <person name="Verduzco D."/>
            <person name="Clerc-Blankenburg K.P."/>
            <person name="Dubchak I."/>
            <person name="Noor M.A.F."/>
            <person name="Anderson W."/>
            <person name="White K.P."/>
            <person name="Clark A.G."/>
            <person name="Schaeffer S.W."/>
            <person name="Gelbart W.M."/>
            <person name="Weinstock G.M."/>
            <person name="Gibbs R.A."/>
        </authorList>
    </citation>
    <scope>NUCLEOTIDE SEQUENCE [LARGE SCALE GENOMIC DNA]</scope>
    <source>
        <strain>MV2-25 / Tucson 14011-0121.94</strain>
    </source>
</reference>
<evidence type="ECO:0000250" key="1"/>
<evidence type="ECO:0000305" key="2"/>
<gene>
    <name type="ORF">GA20914</name>
</gene>